<accession>Q2QV94</accession>
<accession>Q0IP77</accession>
<protein>
    <recommendedName>
        <fullName>Exocyst complex component 5</fullName>
    </recommendedName>
    <alternativeName>
        <fullName>Exocyst complex component Sec10</fullName>
    </alternativeName>
</protein>
<dbReference type="EMBL" id="AL732646">
    <property type="status" value="NOT_ANNOTATED_CDS"/>
    <property type="molecule type" value="Genomic_DNA"/>
</dbReference>
<dbReference type="EMBL" id="DP000011">
    <property type="protein sequence ID" value="ABA96853.1"/>
    <property type="molecule type" value="Genomic_DNA"/>
</dbReference>
<dbReference type="EMBL" id="AP008218">
    <property type="protein sequence ID" value="BAF29488.1"/>
    <property type="molecule type" value="Genomic_DNA"/>
</dbReference>
<dbReference type="EMBL" id="AP014968">
    <property type="protein sequence ID" value="BAT16485.1"/>
    <property type="molecule type" value="Genomic_DNA"/>
</dbReference>
<dbReference type="EMBL" id="AK064983">
    <property type="protein sequence ID" value="BAG89306.1"/>
    <property type="molecule type" value="mRNA"/>
</dbReference>
<dbReference type="RefSeq" id="XP_015620649.1">
    <property type="nucleotide sequence ID" value="XM_015765163.1"/>
</dbReference>
<dbReference type="SMR" id="Q2QV94"/>
<dbReference type="FunCoup" id="Q2QV94">
    <property type="interactions" value="3521"/>
</dbReference>
<dbReference type="STRING" id="39947.Q2QV94"/>
<dbReference type="PaxDb" id="39947-Q2QV94"/>
<dbReference type="EnsemblPlants" id="Os12t0238100-01">
    <property type="protein sequence ID" value="Os12t0238100-01"/>
    <property type="gene ID" value="Os12g0238100"/>
</dbReference>
<dbReference type="Gramene" id="Os12t0238100-01">
    <property type="protein sequence ID" value="Os12t0238100-01"/>
    <property type="gene ID" value="Os12g0238100"/>
</dbReference>
<dbReference type="KEGG" id="dosa:Os12g0238100"/>
<dbReference type="eggNOG" id="KOG3745">
    <property type="taxonomic scope" value="Eukaryota"/>
</dbReference>
<dbReference type="HOGENOM" id="CLU_020771_0_0_1"/>
<dbReference type="InParanoid" id="Q2QV94"/>
<dbReference type="OMA" id="PLCKHHY"/>
<dbReference type="OrthoDB" id="125856at2759"/>
<dbReference type="Proteomes" id="UP000000763">
    <property type="component" value="Chromosome 12"/>
</dbReference>
<dbReference type="Proteomes" id="UP000059680">
    <property type="component" value="Chromosome 12"/>
</dbReference>
<dbReference type="ExpressionAtlas" id="Q2QV94">
    <property type="expression patterns" value="baseline and differential"/>
</dbReference>
<dbReference type="GO" id="GO:0005829">
    <property type="term" value="C:cytosol"/>
    <property type="evidence" value="ECO:0007669"/>
    <property type="project" value="EnsemblPlants"/>
</dbReference>
<dbReference type="GO" id="GO:0000145">
    <property type="term" value="C:exocyst"/>
    <property type="evidence" value="ECO:0000318"/>
    <property type="project" value="GO_Central"/>
</dbReference>
<dbReference type="GO" id="GO:0070062">
    <property type="term" value="C:extracellular exosome"/>
    <property type="evidence" value="ECO:0007669"/>
    <property type="project" value="EnsemblPlants"/>
</dbReference>
<dbReference type="GO" id="GO:0006887">
    <property type="term" value="P:exocytosis"/>
    <property type="evidence" value="ECO:0000318"/>
    <property type="project" value="GO_Central"/>
</dbReference>
<dbReference type="GO" id="GO:0006893">
    <property type="term" value="P:Golgi to plasma membrane transport"/>
    <property type="evidence" value="ECO:0000318"/>
    <property type="project" value="GO_Central"/>
</dbReference>
<dbReference type="GO" id="GO:0015031">
    <property type="term" value="P:protein transport"/>
    <property type="evidence" value="ECO:0007669"/>
    <property type="project" value="UniProtKB-KW"/>
</dbReference>
<dbReference type="InterPro" id="IPR009976">
    <property type="entry name" value="Sec10-like"/>
</dbReference>
<dbReference type="InterPro" id="IPR048627">
    <property type="entry name" value="Sec10_HB"/>
</dbReference>
<dbReference type="InterPro" id="IPR048625">
    <property type="entry name" value="Sec10_N"/>
</dbReference>
<dbReference type="PANTHER" id="PTHR12100:SF0">
    <property type="entry name" value="EXOCYST COMPLEX COMPONENT 5"/>
    <property type="match status" value="1"/>
</dbReference>
<dbReference type="PANTHER" id="PTHR12100">
    <property type="entry name" value="SEC10"/>
    <property type="match status" value="1"/>
</dbReference>
<dbReference type="Pfam" id="PF07393">
    <property type="entry name" value="Sec10_HB"/>
    <property type="match status" value="1"/>
</dbReference>
<dbReference type="Pfam" id="PF20667">
    <property type="entry name" value="Sec10_N"/>
    <property type="match status" value="1"/>
</dbReference>
<gene>
    <name type="primary">SEC10</name>
    <name type="ordered locus">Os12g0238100</name>
    <name type="ordered locus">LOC_Os12g13590</name>
    <name type="ORF">OSJNBb0001P17</name>
</gene>
<name>EXOC5_ORYSJ</name>
<feature type="chain" id="PRO_0000247470" description="Exocyst complex component 5">
    <location>
        <begin position="1"/>
        <end position="806"/>
    </location>
</feature>
<feature type="coiled-coil region" evidence="2">
    <location>
        <begin position="77"/>
        <end position="109"/>
    </location>
</feature>
<reference key="1">
    <citation type="journal article" date="2005" name="BMC Biol.">
        <title>The sequence of rice chromosomes 11 and 12, rich in disease resistance genes and recent gene duplications.</title>
        <authorList>
            <consortium name="The rice chromosomes 11 and 12 sequencing consortia"/>
        </authorList>
    </citation>
    <scope>NUCLEOTIDE SEQUENCE [LARGE SCALE GENOMIC DNA]</scope>
    <source>
        <strain>cv. Nipponbare</strain>
    </source>
</reference>
<reference key="2">
    <citation type="journal article" date="2005" name="Nature">
        <title>The map-based sequence of the rice genome.</title>
        <authorList>
            <consortium name="International rice genome sequencing project (IRGSP)"/>
        </authorList>
    </citation>
    <scope>NUCLEOTIDE SEQUENCE [LARGE SCALE GENOMIC DNA]</scope>
    <source>
        <strain>cv. Nipponbare</strain>
    </source>
</reference>
<reference key="3">
    <citation type="journal article" date="2008" name="Nucleic Acids Res.">
        <title>The rice annotation project database (RAP-DB): 2008 update.</title>
        <authorList>
            <consortium name="The rice annotation project (RAP)"/>
        </authorList>
    </citation>
    <scope>GENOME REANNOTATION</scope>
    <source>
        <strain>cv. Nipponbare</strain>
    </source>
</reference>
<reference key="4">
    <citation type="journal article" date="2013" name="Rice">
        <title>Improvement of the Oryza sativa Nipponbare reference genome using next generation sequence and optical map data.</title>
        <authorList>
            <person name="Kawahara Y."/>
            <person name="de la Bastide M."/>
            <person name="Hamilton J.P."/>
            <person name="Kanamori H."/>
            <person name="McCombie W.R."/>
            <person name="Ouyang S."/>
            <person name="Schwartz D.C."/>
            <person name="Tanaka T."/>
            <person name="Wu J."/>
            <person name="Zhou S."/>
            <person name="Childs K.L."/>
            <person name="Davidson R.M."/>
            <person name="Lin H."/>
            <person name="Quesada-Ocampo L."/>
            <person name="Vaillancourt B."/>
            <person name="Sakai H."/>
            <person name="Lee S.S."/>
            <person name="Kim J."/>
            <person name="Numa H."/>
            <person name="Itoh T."/>
            <person name="Buell C.R."/>
            <person name="Matsumoto T."/>
        </authorList>
    </citation>
    <scope>GENOME REANNOTATION</scope>
    <source>
        <strain>cv. Nipponbare</strain>
    </source>
</reference>
<reference key="5">
    <citation type="journal article" date="2003" name="Science">
        <title>Collection, mapping, and annotation of over 28,000 cDNA clones from japonica rice.</title>
        <authorList>
            <consortium name="The rice full-length cDNA consortium"/>
        </authorList>
    </citation>
    <scope>NUCLEOTIDE SEQUENCE [LARGE SCALE MRNA]</scope>
    <source>
        <strain>cv. Nipponbare</strain>
    </source>
</reference>
<sequence length="806" mass="88229">MPSATDPPAALPLTLDLDDFKGDFSFDALFGTLVDELLPEFRGDDAPGAPPPPPPVLGAAPPVFPAVDELLGLFKHSCKELVDLRRQIDKRLQNLKKEVATQDAKHRKTLGELEKGVDGLFDSFARLDSRISSVGQTAAKIGDHLQSAESQRETASQTIDLIKYLMEFNSTPGDLMELSPLFSDDSRVAEAASIAQKLRSFAEEDVGRHGVPSAVGSANASRGLEVAVANLQEYCNELENRLLARFDTASQRREMSTMAECAKILSQFNRGTSAMQHYVATRPMFIDVDIMSIDIQVVLGEEGPQADHICIAEGLSVLYKEIADTVRREATTIMAVFPSPNEVMSILVQRVLEQRVTAILDKLLIKPSLANLPPIEEGGLLHYLRVLAVAYDKTKELAKELQSISCGDLDIEGLTESIFVSHKDEYTEFEQASLRQQYQSKMAELRAEAKQQSESTGTIGRSNGAAVTTSLQQQISVTVVTEFVRWNEEAISRCTLLFSQPATVAANVRSIFACLLDQVSQYLTEGLDHARESLNHAATQRDRYVIGTSVSRRVATAAANAAEAAAAAGESSFRSFMIAVQRCASSVAILQQYFSNTISRLLLPVDGAHPSACEDMGSAVSVVEAAAHKGLLQCIDTVMSEVERLLSSEQKATDYRTPDDGAAPDHRPTNACIRIVAYLSRVLEVAFSALEGLNKQSFLTELGNRLHKGLLNHWQKFTFSPSGGLRLKRDITEYGEFVRSFNAPSIDEKFELLGIMANVFIVAPESLASLFEGTPSIRKDALRFIQLRDDYKTAKIASMLNSIMAE</sequence>
<evidence type="ECO:0000250" key="1"/>
<evidence type="ECO:0000255" key="2"/>
<evidence type="ECO:0000305" key="3"/>
<proteinExistence type="evidence at transcript level"/>
<keyword id="KW-0175">Coiled coil</keyword>
<keyword id="KW-0268">Exocytosis</keyword>
<keyword id="KW-0653">Protein transport</keyword>
<keyword id="KW-1185">Reference proteome</keyword>
<keyword id="KW-0813">Transport</keyword>
<comment type="function">
    <text>Component of the exocyst complex involved in the docking of exocytic vesicles with fusion sites on the plasma membrane.</text>
</comment>
<comment type="subunit">
    <text evidence="1">The exocyst complex is composed of EXOC1, EXOC2, EXOC3, EXOC4, EXOC5, EXOC6, EXOC7 and EXOC8.</text>
</comment>
<comment type="similarity">
    <text evidence="3">Belongs to the SEC10 family.</text>
</comment>
<organism>
    <name type="scientific">Oryza sativa subsp. japonica</name>
    <name type="common">Rice</name>
    <dbReference type="NCBI Taxonomy" id="39947"/>
    <lineage>
        <taxon>Eukaryota</taxon>
        <taxon>Viridiplantae</taxon>
        <taxon>Streptophyta</taxon>
        <taxon>Embryophyta</taxon>
        <taxon>Tracheophyta</taxon>
        <taxon>Spermatophyta</taxon>
        <taxon>Magnoliopsida</taxon>
        <taxon>Liliopsida</taxon>
        <taxon>Poales</taxon>
        <taxon>Poaceae</taxon>
        <taxon>BOP clade</taxon>
        <taxon>Oryzoideae</taxon>
        <taxon>Oryzeae</taxon>
        <taxon>Oryzinae</taxon>
        <taxon>Oryza</taxon>
        <taxon>Oryza sativa</taxon>
    </lineage>
</organism>